<evidence type="ECO:0000255" key="1">
    <source>
        <dbReference type="HAMAP-Rule" id="MF_00017"/>
    </source>
</evidence>
<sequence length="200" mass="21737">MKFSPLLDEMMKALQVLPGVGPKSAQRMAFTLLERERSGGLRLAQLLSRALTEIGHCSHCRTFTENERCEICANPKREENGLLCVVESPADVAAIEQTGQFSGRYFVLMGHLSPLDGIGPEELGLEILERRLKDEAISELILATNPTIEGDATAWYIADMARAAGVKVSRIAHGVPVGGELELVDGTTLSHSLMGRQPLN</sequence>
<keyword id="KW-0227">DNA damage</keyword>
<keyword id="KW-0233">DNA recombination</keyword>
<keyword id="KW-0234">DNA repair</keyword>
<keyword id="KW-0479">Metal-binding</keyword>
<keyword id="KW-1185">Reference proteome</keyword>
<keyword id="KW-0862">Zinc</keyword>
<keyword id="KW-0863">Zinc-finger</keyword>
<feature type="chain" id="PRO_1000001504" description="Recombination protein RecR">
    <location>
        <begin position="1"/>
        <end position="200"/>
    </location>
</feature>
<feature type="domain" description="Toprim" evidence="1">
    <location>
        <begin position="81"/>
        <end position="176"/>
    </location>
</feature>
<feature type="zinc finger region" description="C4-type" evidence="1">
    <location>
        <begin position="57"/>
        <end position="72"/>
    </location>
</feature>
<organism>
    <name type="scientific">Aeromonas hydrophila subsp. hydrophila (strain ATCC 7966 / DSM 30187 / BCRC 13018 / CCUG 14551 / JCM 1027 / KCTC 2358 / NCIMB 9240 / NCTC 8049)</name>
    <dbReference type="NCBI Taxonomy" id="380703"/>
    <lineage>
        <taxon>Bacteria</taxon>
        <taxon>Pseudomonadati</taxon>
        <taxon>Pseudomonadota</taxon>
        <taxon>Gammaproteobacteria</taxon>
        <taxon>Aeromonadales</taxon>
        <taxon>Aeromonadaceae</taxon>
        <taxon>Aeromonas</taxon>
    </lineage>
</organism>
<name>RECR_AERHH</name>
<gene>
    <name evidence="1" type="primary">recR</name>
    <name type="ordered locus">AHA_2491</name>
</gene>
<protein>
    <recommendedName>
        <fullName evidence="1">Recombination protein RecR</fullName>
    </recommendedName>
</protein>
<dbReference type="EMBL" id="CP000462">
    <property type="protein sequence ID" value="ABK39180.1"/>
    <property type="molecule type" value="Genomic_DNA"/>
</dbReference>
<dbReference type="RefSeq" id="WP_010633741.1">
    <property type="nucleotide sequence ID" value="NC_008570.1"/>
</dbReference>
<dbReference type="RefSeq" id="YP_857005.1">
    <property type="nucleotide sequence ID" value="NC_008570.1"/>
</dbReference>
<dbReference type="SMR" id="A0KL54"/>
<dbReference type="STRING" id="380703.AHA_2491"/>
<dbReference type="EnsemblBacteria" id="ABK39180">
    <property type="protein sequence ID" value="ABK39180"/>
    <property type="gene ID" value="AHA_2491"/>
</dbReference>
<dbReference type="GeneID" id="47845200"/>
<dbReference type="KEGG" id="aha:AHA_2491"/>
<dbReference type="PATRIC" id="fig|380703.7.peg.2491"/>
<dbReference type="eggNOG" id="COG0353">
    <property type="taxonomic scope" value="Bacteria"/>
</dbReference>
<dbReference type="HOGENOM" id="CLU_060739_1_2_6"/>
<dbReference type="OrthoDB" id="9802672at2"/>
<dbReference type="Proteomes" id="UP000000756">
    <property type="component" value="Chromosome"/>
</dbReference>
<dbReference type="GO" id="GO:0003677">
    <property type="term" value="F:DNA binding"/>
    <property type="evidence" value="ECO:0007669"/>
    <property type="project" value="UniProtKB-UniRule"/>
</dbReference>
<dbReference type="GO" id="GO:0008270">
    <property type="term" value="F:zinc ion binding"/>
    <property type="evidence" value="ECO:0007669"/>
    <property type="project" value="UniProtKB-KW"/>
</dbReference>
<dbReference type="GO" id="GO:0006310">
    <property type="term" value="P:DNA recombination"/>
    <property type="evidence" value="ECO:0007669"/>
    <property type="project" value="UniProtKB-UniRule"/>
</dbReference>
<dbReference type="GO" id="GO:0006281">
    <property type="term" value="P:DNA repair"/>
    <property type="evidence" value="ECO:0007669"/>
    <property type="project" value="UniProtKB-UniRule"/>
</dbReference>
<dbReference type="CDD" id="cd01025">
    <property type="entry name" value="TOPRIM_recR"/>
    <property type="match status" value="1"/>
</dbReference>
<dbReference type="FunFam" id="3.40.1360.10:FF:000001">
    <property type="entry name" value="Recombination protein RecR"/>
    <property type="match status" value="1"/>
</dbReference>
<dbReference type="Gene3D" id="3.30.60.80">
    <property type="match status" value="1"/>
</dbReference>
<dbReference type="Gene3D" id="3.40.1360.10">
    <property type="match status" value="1"/>
</dbReference>
<dbReference type="Gene3D" id="6.10.250.240">
    <property type="match status" value="1"/>
</dbReference>
<dbReference type="Gene3D" id="1.10.8.420">
    <property type="entry name" value="RecR Domain 1"/>
    <property type="match status" value="1"/>
</dbReference>
<dbReference type="HAMAP" id="MF_00017">
    <property type="entry name" value="RecR"/>
    <property type="match status" value="1"/>
</dbReference>
<dbReference type="InterPro" id="IPR000093">
    <property type="entry name" value="DNA_Rcmb_RecR"/>
</dbReference>
<dbReference type="InterPro" id="IPR023627">
    <property type="entry name" value="Rcmb_RecR"/>
</dbReference>
<dbReference type="InterPro" id="IPR015967">
    <property type="entry name" value="Rcmb_RecR_Znf"/>
</dbReference>
<dbReference type="InterPro" id="IPR006171">
    <property type="entry name" value="TOPRIM_dom"/>
</dbReference>
<dbReference type="InterPro" id="IPR034137">
    <property type="entry name" value="TOPRIM_RecR"/>
</dbReference>
<dbReference type="NCBIfam" id="TIGR00615">
    <property type="entry name" value="recR"/>
    <property type="match status" value="1"/>
</dbReference>
<dbReference type="PANTHER" id="PTHR30446">
    <property type="entry name" value="RECOMBINATION PROTEIN RECR"/>
    <property type="match status" value="1"/>
</dbReference>
<dbReference type="PANTHER" id="PTHR30446:SF0">
    <property type="entry name" value="RECOMBINATION PROTEIN RECR"/>
    <property type="match status" value="1"/>
</dbReference>
<dbReference type="Pfam" id="PF21175">
    <property type="entry name" value="RecR_C"/>
    <property type="match status" value="1"/>
</dbReference>
<dbReference type="Pfam" id="PF21176">
    <property type="entry name" value="RecR_HhH"/>
    <property type="match status" value="1"/>
</dbReference>
<dbReference type="Pfam" id="PF02132">
    <property type="entry name" value="RecR_ZnF"/>
    <property type="match status" value="1"/>
</dbReference>
<dbReference type="Pfam" id="PF13662">
    <property type="entry name" value="Toprim_4"/>
    <property type="match status" value="1"/>
</dbReference>
<dbReference type="SMART" id="SM00493">
    <property type="entry name" value="TOPRIM"/>
    <property type="match status" value="1"/>
</dbReference>
<dbReference type="SUPFAM" id="SSF111304">
    <property type="entry name" value="Recombination protein RecR"/>
    <property type="match status" value="1"/>
</dbReference>
<dbReference type="PROSITE" id="PS50880">
    <property type="entry name" value="TOPRIM"/>
    <property type="match status" value="1"/>
</dbReference>
<accession>A0KL54</accession>
<proteinExistence type="inferred from homology"/>
<reference key="1">
    <citation type="journal article" date="2006" name="J. Bacteriol.">
        <title>Genome sequence of Aeromonas hydrophila ATCC 7966T: jack of all trades.</title>
        <authorList>
            <person name="Seshadri R."/>
            <person name="Joseph S.W."/>
            <person name="Chopra A.K."/>
            <person name="Sha J."/>
            <person name="Shaw J."/>
            <person name="Graf J."/>
            <person name="Haft D.H."/>
            <person name="Wu M."/>
            <person name="Ren Q."/>
            <person name="Rosovitz M.J."/>
            <person name="Madupu R."/>
            <person name="Tallon L."/>
            <person name="Kim M."/>
            <person name="Jin S."/>
            <person name="Vuong H."/>
            <person name="Stine O.C."/>
            <person name="Ali A."/>
            <person name="Horneman A.J."/>
            <person name="Heidelberg J.F."/>
        </authorList>
    </citation>
    <scope>NUCLEOTIDE SEQUENCE [LARGE SCALE GENOMIC DNA]</scope>
    <source>
        <strain>ATCC 7966 / DSM 30187 / BCRC 13018 / CCUG 14551 / JCM 1027 / KCTC 2358 / NCIMB 9240 / NCTC 8049</strain>
    </source>
</reference>
<comment type="function">
    <text evidence="1">May play a role in DNA repair. It seems to be involved in an RecBC-independent recombinational process of DNA repair. It may act with RecF and RecO.</text>
</comment>
<comment type="similarity">
    <text evidence="1">Belongs to the RecR family.</text>
</comment>